<comment type="function">
    <text evidence="1">NDH-1 shuttles electrons from NADH, via FMN and iron-sulfur (Fe-S) centers, to quinones in the respiratory chain. The immediate electron acceptor for the enzyme in this species is believed to be a menaquinone. Couples the redox reaction to proton translocation (for every two electrons transferred, four hydrogen ions are translocated across the cytoplasmic membrane), and thus conserves the redox energy in a proton gradient.</text>
</comment>
<comment type="catalytic activity">
    <reaction evidence="1">
        <text>a quinone + NADH + 5 H(+)(in) = a quinol + NAD(+) + 4 H(+)(out)</text>
        <dbReference type="Rhea" id="RHEA:57888"/>
        <dbReference type="ChEBI" id="CHEBI:15378"/>
        <dbReference type="ChEBI" id="CHEBI:24646"/>
        <dbReference type="ChEBI" id="CHEBI:57540"/>
        <dbReference type="ChEBI" id="CHEBI:57945"/>
        <dbReference type="ChEBI" id="CHEBI:132124"/>
    </reaction>
</comment>
<comment type="subunit">
    <text evidence="1">NDH-1 is composed of 14 different subunits. Subunits NuoB, C, D, E, F, and G constitute the peripheral sector of the complex.</text>
</comment>
<comment type="subcellular location">
    <subcellularLocation>
        <location evidence="1">Cell membrane</location>
        <topology evidence="1">Peripheral membrane protein</topology>
        <orientation evidence="1">Cytoplasmic side</orientation>
    </subcellularLocation>
</comment>
<comment type="similarity">
    <text evidence="1">Belongs to the complex I 30 kDa subunit family.</text>
</comment>
<protein>
    <recommendedName>
        <fullName evidence="1">NADH-quinone oxidoreductase subunit C</fullName>
        <ecNumber evidence="1">7.1.1.-</ecNumber>
    </recommendedName>
    <alternativeName>
        <fullName evidence="1">NADH dehydrogenase I subunit C</fullName>
    </alternativeName>
    <alternativeName>
        <fullName evidence="1">NDH-1 subunit C</fullName>
    </alternativeName>
</protein>
<dbReference type="EC" id="7.1.1.-" evidence="1"/>
<dbReference type="EMBL" id="AM408590">
    <property type="protein sequence ID" value="CAL73159.1"/>
    <property type="molecule type" value="Genomic_DNA"/>
</dbReference>
<dbReference type="RefSeq" id="WP_003416425.1">
    <property type="nucleotide sequence ID" value="NC_008769.1"/>
</dbReference>
<dbReference type="SMR" id="A1KNE3"/>
<dbReference type="KEGG" id="mbb:BCG_3170"/>
<dbReference type="HOGENOM" id="CLU_042628_4_0_11"/>
<dbReference type="Proteomes" id="UP000001472">
    <property type="component" value="Chromosome"/>
</dbReference>
<dbReference type="GO" id="GO:0005886">
    <property type="term" value="C:plasma membrane"/>
    <property type="evidence" value="ECO:0007669"/>
    <property type="project" value="UniProtKB-SubCell"/>
</dbReference>
<dbReference type="GO" id="GO:0008137">
    <property type="term" value="F:NADH dehydrogenase (ubiquinone) activity"/>
    <property type="evidence" value="ECO:0007669"/>
    <property type="project" value="InterPro"/>
</dbReference>
<dbReference type="GO" id="GO:0050136">
    <property type="term" value="F:NADH:ubiquinone reductase (non-electrogenic) activity"/>
    <property type="evidence" value="ECO:0007669"/>
    <property type="project" value="UniProtKB-UniRule"/>
</dbReference>
<dbReference type="GO" id="GO:0048038">
    <property type="term" value="F:quinone binding"/>
    <property type="evidence" value="ECO:0007669"/>
    <property type="project" value="UniProtKB-KW"/>
</dbReference>
<dbReference type="FunFam" id="3.30.460.80:FF:000006">
    <property type="entry name" value="NADH-quinone oxidoreductase subunit C"/>
    <property type="match status" value="1"/>
</dbReference>
<dbReference type="Gene3D" id="3.30.460.80">
    <property type="entry name" value="NADH:ubiquinone oxidoreductase, 30kDa subunit"/>
    <property type="match status" value="1"/>
</dbReference>
<dbReference type="HAMAP" id="MF_01357">
    <property type="entry name" value="NDH1_NuoC"/>
    <property type="match status" value="1"/>
</dbReference>
<dbReference type="InterPro" id="IPR010218">
    <property type="entry name" value="NADH_DH_suC"/>
</dbReference>
<dbReference type="InterPro" id="IPR037232">
    <property type="entry name" value="NADH_quin_OxRdtase_su_C/D-like"/>
</dbReference>
<dbReference type="InterPro" id="IPR001268">
    <property type="entry name" value="NADH_UbQ_OxRdtase_30kDa_su"/>
</dbReference>
<dbReference type="NCBIfam" id="TIGR01961">
    <property type="entry name" value="NuoC_fam"/>
    <property type="match status" value="1"/>
</dbReference>
<dbReference type="NCBIfam" id="NF005856">
    <property type="entry name" value="PRK07785.1"/>
    <property type="match status" value="1"/>
</dbReference>
<dbReference type="PANTHER" id="PTHR10884:SF14">
    <property type="entry name" value="NADH DEHYDROGENASE [UBIQUINONE] IRON-SULFUR PROTEIN 3, MITOCHONDRIAL"/>
    <property type="match status" value="1"/>
</dbReference>
<dbReference type="PANTHER" id="PTHR10884">
    <property type="entry name" value="NADH DEHYDROGENASE UBIQUINONE IRON-SULFUR PROTEIN 3"/>
    <property type="match status" value="1"/>
</dbReference>
<dbReference type="Pfam" id="PF00329">
    <property type="entry name" value="Complex1_30kDa"/>
    <property type="match status" value="1"/>
</dbReference>
<dbReference type="SUPFAM" id="SSF143243">
    <property type="entry name" value="Nqo5-like"/>
    <property type="match status" value="1"/>
</dbReference>
<keyword id="KW-1003">Cell membrane</keyword>
<keyword id="KW-0472">Membrane</keyword>
<keyword id="KW-0520">NAD</keyword>
<keyword id="KW-0874">Quinone</keyword>
<keyword id="KW-1278">Translocase</keyword>
<keyword id="KW-0813">Transport</keyword>
<accession>A1KNE3</accession>
<proteinExistence type="inferred from homology"/>
<sequence>MSPPNQDAQEGRPDSPTAEVVDVRRGMFGVSGTGDTSGYGRLVRQVVLPGSSPRPYGGYFDDIVDRLAEALRHERVEFEDAVEKVVVYRDELTLHVRRDLLPRVAQRLRDEPELRFELCLGVSGVHYPHETGRELHAVYPLQSITHNRRLRLEVSAPDSDPHIPSLFAIYPTNDWHERETYDFFGIIFDGHPALTRIEMPDDWQGHPQRKDYPLGGIPVEYKGAQIPPPDERRGYN</sequence>
<name>NUOC_MYCBP</name>
<organism>
    <name type="scientific">Mycobacterium bovis (strain BCG / Pasteur 1173P2)</name>
    <dbReference type="NCBI Taxonomy" id="410289"/>
    <lineage>
        <taxon>Bacteria</taxon>
        <taxon>Bacillati</taxon>
        <taxon>Actinomycetota</taxon>
        <taxon>Actinomycetes</taxon>
        <taxon>Mycobacteriales</taxon>
        <taxon>Mycobacteriaceae</taxon>
        <taxon>Mycobacterium</taxon>
        <taxon>Mycobacterium tuberculosis complex</taxon>
    </lineage>
</organism>
<reference key="1">
    <citation type="journal article" date="2007" name="Proc. Natl. Acad. Sci. U.S.A.">
        <title>Genome plasticity of BCG and impact on vaccine efficacy.</title>
        <authorList>
            <person name="Brosch R."/>
            <person name="Gordon S.V."/>
            <person name="Garnier T."/>
            <person name="Eiglmeier K."/>
            <person name="Frigui W."/>
            <person name="Valenti P."/>
            <person name="Dos Santos S."/>
            <person name="Duthoy S."/>
            <person name="Lacroix C."/>
            <person name="Garcia-Pelayo C."/>
            <person name="Inwald J.K."/>
            <person name="Golby P."/>
            <person name="Garcia J.N."/>
            <person name="Hewinson R.G."/>
            <person name="Behr M.A."/>
            <person name="Quail M.A."/>
            <person name="Churcher C."/>
            <person name="Barrell B.G."/>
            <person name="Parkhill J."/>
            <person name="Cole S.T."/>
        </authorList>
    </citation>
    <scope>NUCLEOTIDE SEQUENCE [LARGE SCALE GENOMIC DNA]</scope>
    <source>
        <strain>BCG / Pasteur 1173P2</strain>
    </source>
</reference>
<evidence type="ECO:0000255" key="1">
    <source>
        <dbReference type="HAMAP-Rule" id="MF_01357"/>
    </source>
</evidence>
<evidence type="ECO:0000256" key="2">
    <source>
        <dbReference type="SAM" id="MobiDB-lite"/>
    </source>
</evidence>
<feature type="chain" id="PRO_0000358133" description="NADH-quinone oxidoreductase subunit C">
    <location>
        <begin position="1"/>
        <end position="236"/>
    </location>
</feature>
<feature type="region of interest" description="Disordered" evidence="2">
    <location>
        <begin position="1"/>
        <end position="20"/>
    </location>
</feature>
<gene>
    <name evidence="1" type="primary">nuoC</name>
    <name type="ordered locus">BCG_3170</name>
</gene>